<gene>
    <name evidence="1" type="primary">pgk</name>
</gene>
<organism>
    <name type="scientific">Spiroplasma citri</name>
    <dbReference type="NCBI Taxonomy" id="2133"/>
    <lineage>
        <taxon>Bacteria</taxon>
        <taxon>Bacillati</taxon>
        <taxon>Mycoplasmatota</taxon>
        <taxon>Mollicutes</taxon>
        <taxon>Entomoplasmatales</taxon>
        <taxon>Spiroplasmataceae</taxon>
        <taxon>Spiroplasma</taxon>
    </lineage>
</organism>
<comment type="catalytic activity">
    <reaction evidence="1">
        <text>(2R)-3-phosphoglycerate + ATP = (2R)-3-phospho-glyceroyl phosphate + ADP</text>
        <dbReference type="Rhea" id="RHEA:14801"/>
        <dbReference type="ChEBI" id="CHEBI:30616"/>
        <dbReference type="ChEBI" id="CHEBI:57604"/>
        <dbReference type="ChEBI" id="CHEBI:58272"/>
        <dbReference type="ChEBI" id="CHEBI:456216"/>
        <dbReference type="EC" id="2.7.2.3"/>
    </reaction>
</comment>
<comment type="pathway">
    <text evidence="1">Carbohydrate degradation; glycolysis; pyruvate from D-glyceraldehyde 3-phosphate: step 2/5.</text>
</comment>
<comment type="subunit">
    <text evidence="1">Monomer.</text>
</comment>
<comment type="subcellular location">
    <subcellularLocation>
        <location evidence="1">Cytoplasm</location>
    </subcellularLocation>
</comment>
<comment type="similarity">
    <text evidence="1">Belongs to the phosphoglycerate kinase family.</text>
</comment>
<sequence>MTNKKELKDVQVKGKKVLVRVDFNVPMKDGQVTDDNRIIAALPTIKYLIAQEAKVILFSHLGKVKTADDLEKRDMAPVAKVLEQKLGQPVKFINAFEGKQLEEAINEMHNKEVILFQNTRFADIINSNGQISVDSEGKAAAKRESKNDSALGKYWASLGDVFVNDAFGTAHRAHASNVGIAENITESCLGFLVEKEVKMLSQCVDNPVKPFVAIIGGAKVSDKIGVIEHLLTKADKILIGGGMAYTFFAAQGHKIGNSLLEVDKVEIAKTFLAKGQGKIILPIDALEAPEFADVPAKVTTGFDIDDGYMGLDIGPKTIELFKKELADAKTVTWNGPMGVFEFKNYSIGTKAVCEAIAELKGAFTLIGGGDSAAAAIQLGYKDKFTHISTGGGASLEYMEGKPLPGIEAVQSK</sequence>
<name>PGK_SPICI</name>
<accession>Q7WTU1</accession>
<reference key="1">
    <citation type="submission" date="2003-08" db="EMBL/GenBank/DDBJ databases">
        <title>Genome sequence of Spiroplasma citri the plant pathogen and phloem restricted mollicute.</title>
        <authorList>
            <person name="Foissac X."/>
            <person name="Carle P."/>
            <person name="Saillard C."/>
            <person name="Blanchard A."/>
        </authorList>
    </citation>
    <scope>NUCLEOTIDE SEQUENCE [GENOMIC DNA]</scope>
    <source>
        <strain>GII3</strain>
    </source>
</reference>
<keyword id="KW-0067">ATP-binding</keyword>
<keyword id="KW-0963">Cytoplasm</keyword>
<keyword id="KW-0324">Glycolysis</keyword>
<keyword id="KW-0418">Kinase</keyword>
<keyword id="KW-0547">Nucleotide-binding</keyword>
<keyword id="KW-0808">Transferase</keyword>
<protein>
    <recommendedName>
        <fullName evidence="1">Phosphoglycerate kinase</fullName>
        <ecNumber evidence="1">2.7.2.3</ecNumber>
    </recommendedName>
</protein>
<feature type="chain" id="PRO_0000146000" description="Phosphoglycerate kinase">
    <location>
        <begin position="1"/>
        <end position="412"/>
    </location>
</feature>
<feature type="binding site" evidence="1">
    <location>
        <begin position="22"/>
        <end position="24"/>
    </location>
    <ligand>
        <name>substrate</name>
    </ligand>
</feature>
<feature type="binding site" evidence="1">
    <location>
        <position position="37"/>
    </location>
    <ligand>
        <name>substrate</name>
    </ligand>
</feature>
<feature type="binding site" evidence="1">
    <location>
        <begin position="60"/>
        <end position="63"/>
    </location>
    <ligand>
        <name>substrate</name>
    </ligand>
</feature>
<feature type="binding site" evidence="1">
    <location>
        <position position="120"/>
    </location>
    <ligand>
        <name>substrate</name>
    </ligand>
</feature>
<feature type="binding site" evidence="1">
    <location>
        <position position="172"/>
    </location>
    <ligand>
        <name>substrate</name>
    </ligand>
</feature>
<feature type="binding site" evidence="1">
    <location>
        <position position="223"/>
    </location>
    <ligand>
        <name>ATP</name>
        <dbReference type="ChEBI" id="CHEBI:30616"/>
    </ligand>
</feature>
<feature type="binding site" evidence="1">
    <location>
        <position position="310"/>
    </location>
    <ligand>
        <name>ATP</name>
        <dbReference type="ChEBI" id="CHEBI:30616"/>
    </ligand>
</feature>
<feature type="binding site" evidence="1">
    <location>
        <position position="341"/>
    </location>
    <ligand>
        <name>ATP</name>
        <dbReference type="ChEBI" id="CHEBI:30616"/>
    </ligand>
</feature>
<feature type="binding site" evidence="1">
    <location>
        <begin position="368"/>
        <end position="371"/>
    </location>
    <ligand>
        <name>ATP</name>
        <dbReference type="ChEBI" id="CHEBI:30616"/>
    </ligand>
</feature>
<proteinExistence type="inferred from homology"/>
<evidence type="ECO:0000255" key="1">
    <source>
        <dbReference type="HAMAP-Rule" id="MF_00145"/>
    </source>
</evidence>
<dbReference type="EC" id="2.7.2.3" evidence="1"/>
<dbReference type="EMBL" id="AJ580006">
    <property type="protein sequence ID" value="CAE30465.1"/>
    <property type="molecule type" value="Genomic_DNA"/>
</dbReference>
<dbReference type="SMR" id="Q7WTU1"/>
<dbReference type="STRING" id="2133.SCITRI_00231"/>
<dbReference type="MoonProt" id="Q7WTU1"/>
<dbReference type="UniPathway" id="UPA00109">
    <property type="reaction ID" value="UER00185"/>
</dbReference>
<dbReference type="GO" id="GO:0005884">
    <property type="term" value="C:actin filament"/>
    <property type="evidence" value="ECO:0000314"/>
    <property type="project" value="CAFA"/>
</dbReference>
<dbReference type="GO" id="GO:0005829">
    <property type="term" value="C:cytosol"/>
    <property type="evidence" value="ECO:0007669"/>
    <property type="project" value="TreeGrafter"/>
</dbReference>
<dbReference type="GO" id="GO:0003779">
    <property type="term" value="F:actin binding"/>
    <property type="evidence" value="ECO:0000314"/>
    <property type="project" value="CAFA"/>
</dbReference>
<dbReference type="GO" id="GO:0043531">
    <property type="term" value="F:ADP binding"/>
    <property type="evidence" value="ECO:0007669"/>
    <property type="project" value="TreeGrafter"/>
</dbReference>
<dbReference type="GO" id="GO:0005524">
    <property type="term" value="F:ATP binding"/>
    <property type="evidence" value="ECO:0007669"/>
    <property type="project" value="UniProtKB-KW"/>
</dbReference>
<dbReference type="GO" id="GO:0004618">
    <property type="term" value="F:phosphoglycerate kinase activity"/>
    <property type="evidence" value="ECO:0007669"/>
    <property type="project" value="UniProtKB-UniRule"/>
</dbReference>
<dbReference type="GO" id="GO:0006094">
    <property type="term" value="P:gluconeogenesis"/>
    <property type="evidence" value="ECO:0007669"/>
    <property type="project" value="TreeGrafter"/>
</dbReference>
<dbReference type="GO" id="GO:0006096">
    <property type="term" value="P:glycolytic process"/>
    <property type="evidence" value="ECO:0007669"/>
    <property type="project" value="UniProtKB-UniRule"/>
</dbReference>
<dbReference type="GO" id="GO:0044409">
    <property type="term" value="P:symbiont entry into host"/>
    <property type="evidence" value="ECO:0000314"/>
    <property type="project" value="CAFA"/>
</dbReference>
<dbReference type="FunFam" id="3.40.50.1260:FF:000001">
    <property type="entry name" value="Phosphoglycerate kinase"/>
    <property type="match status" value="1"/>
</dbReference>
<dbReference type="FunFam" id="3.40.50.1260:FF:000008">
    <property type="entry name" value="Phosphoglycerate kinase"/>
    <property type="match status" value="1"/>
</dbReference>
<dbReference type="Gene3D" id="3.40.50.1260">
    <property type="entry name" value="Phosphoglycerate kinase, N-terminal domain"/>
    <property type="match status" value="2"/>
</dbReference>
<dbReference type="HAMAP" id="MF_00145">
    <property type="entry name" value="Phosphoglyc_kinase"/>
    <property type="match status" value="1"/>
</dbReference>
<dbReference type="InterPro" id="IPR001576">
    <property type="entry name" value="Phosphoglycerate_kinase"/>
</dbReference>
<dbReference type="InterPro" id="IPR015911">
    <property type="entry name" value="Phosphoglycerate_kinase_CS"/>
</dbReference>
<dbReference type="InterPro" id="IPR015824">
    <property type="entry name" value="Phosphoglycerate_kinase_N"/>
</dbReference>
<dbReference type="InterPro" id="IPR036043">
    <property type="entry name" value="Phosphoglycerate_kinase_sf"/>
</dbReference>
<dbReference type="PANTHER" id="PTHR11406">
    <property type="entry name" value="PHOSPHOGLYCERATE KINASE"/>
    <property type="match status" value="1"/>
</dbReference>
<dbReference type="PANTHER" id="PTHR11406:SF23">
    <property type="entry name" value="PHOSPHOGLYCERATE KINASE 1, CHLOROPLASTIC-RELATED"/>
    <property type="match status" value="1"/>
</dbReference>
<dbReference type="Pfam" id="PF00162">
    <property type="entry name" value="PGK"/>
    <property type="match status" value="1"/>
</dbReference>
<dbReference type="PIRSF" id="PIRSF000724">
    <property type="entry name" value="Pgk"/>
    <property type="match status" value="1"/>
</dbReference>
<dbReference type="PRINTS" id="PR00477">
    <property type="entry name" value="PHGLYCKINASE"/>
</dbReference>
<dbReference type="SUPFAM" id="SSF53748">
    <property type="entry name" value="Phosphoglycerate kinase"/>
    <property type="match status" value="1"/>
</dbReference>
<dbReference type="PROSITE" id="PS00111">
    <property type="entry name" value="PGLYCERATE_KINASE"/>
    <property type="match status" value="1"/>
</dbReference>